<gene>
    <name evidence="1" type="primary">gltX</name>
    <name type="ordered locus">SCH_2416</name>
</gene>
<comment type="function">
    <text evidence="1">Catalyzes the attachment of glutamate to tRNA(Glu) in a two-step reaction: glutamate is first activated by ATP to form Glu-AMP and then transferred to the acceptor end of tRNA(Glu).</text>
</comment>
<comment type="catalytic activity">
    <reaction evidence="1">
        <text>tRNA(Glu) + L-glutamate + ATP = L-glutamyl-tRNA(Glu) + AMP + diphosphate</text>
        <dbReference type="Rhea" id="RHEA:23540"/>
        <dbReference type="Rhea" id="RHEA-COMP:9663"/>
        <dbReference type="Rhea" id="RHEA-COMP:9680"/>
        <dbReference type="ChEBI" id="CHEBI:29985"/>
        <dbReference type="ChEBI" id="CHEBI:30616"/>
        <dbReference type="ChEBI" id="CHEBI:33019"/>
        <dbReference type="ChEBI" id="CHEBI:78442"/>
        <dbReference type="ChEBI" id="CHEBI:78520"/>
        <dbReference type="ChEBI" id="CHEBI:456215"/>
        <dbReference type="EC" id="6.1.1.17"/>
    </reaction>
</comment>
<comment type="cofactor">
    <cofactor evidence="1">
        <name>Zn(2+)</name>
        <dbReference type="ChEBI" id="CHEBI:29105"/>
    </cofactor>
    <text evidence="1">Binds 1 zinc ion per subunit.</text>
</comment>
<comment type="subunit">
    <text evidence="1">Monomer.</text>
</comment>
<comment type="subcellular location">
    <subcellularLocation>
        <location evidence="1">Cytoplasm</location>
    </subcellularLocation>
</comment>
<comment type="similarity">
    <text evidence="1">Belongs to the class-I aminoacyl-tRNA synthetase family. Glutamate--tRNA ligase type 1 subfamily.</text>
</comment>
<keyword id="KW-0030">Aminoacyl-tRNA synthetase</keyword>
<keyword id="KW-0067">ATP-binding</keyword>
<keyword id="KW-0963">Cytoplasm</keyword>
<keyword id="KW-0436">Ligase</keyword>
<keyword id="KW-0479">Metal-binding</keyword>
<keyword id="KW-0547">Nucleotide-binding</keyword>
<keyword id="KW-0648">Protein biosynthesis</keyword>
<keyword id="KW-0862">Zinc</keyword>
<dbReference type="EC" id="6.1.1.17" evidence="1"/>
<dbReference type="EMBL" id="AE017220">
    <property type="protein sequence ID" value="AAX66322.1"/>
    <property type="molecule type" value="Genomic_DNA"/>
</dbReference>
<dbReference type="RefSeq" id="WP_000695629.1">
    <property type="nucleotide sequence ID" value="NC_006905.1"/>
</dbReference>
<dbReference type="SMR" id="Q57LU0"/>
<dbReference type="KEGG" id="sec:SCH_2416"/>
<dbReference type="HOGENOM" id="CLU_015768_6_0_6"/>
<dbReference type="Proteomes" id="UP000000538">
    <property type="component" value="Chromosome"/>
</dbReference>
<dbReference type="GO" id="GO:0005829">
    <property type="term" value="C:cytosol"/>
    <property type="evidence" value="ECO:0007669"/>
    <property type="project" value="TreeGrafter"/>
</dbReference>
<dbReference type="GO" id="GO:0005524">
    <property type="term" value="F:ATP binding"/>
    <property type="evidence" value="ECO:0007669"/>
    <property type="project" value="UniProtKB-UniRule"/>
</dbReference>
<dbReference type="GO" id="GO:0004818">
    <property type="term" value="F:glutamate-tRNA ligase activity"/>
    <property type="evidence" value="ECO:0007669"/>
    <property type="project" value="UniProtKB-UniRule"/>
</dbReference>
<dbReference type="GO" id="GO:0000049">
    <property type="term" value="F:tRNA binding"/>
    <property type="evidence" value="ECO:0007669"/>
    <property type="project" value="InterPro"/>
</dbReference>
<dbReference type="GO" id="GO:0008270">
    <property type="term" value="F:zinc ion binding"/>
    <property type="evidence" value="ECO:0007669"/>
    <property type="project" value="UniProtKB-UniRule"/>
</dbReference>
<dbReference type="GO" id="GO:0006424">
    <property type="term" value="P:glutamyl-tRNA aminoacylation"/>
    <property type="evidence" value="ECO:0007669"/>
    <property type="project" value="UniProtKB-UniRule"/>
</dbReference>
<dbReference type="CDD" id="cd00808">
    <property type="entry name" value="GluRS_core"/>
    <property type="match status" value="1"/>
</dbReference>
<dbReference type="FunFam" id="1.10.10.350:FF:000001">
    <property type="entry name" value="Glutamate--tRNA ligase"/>
    <property type="match status" value="1"/>
</dbReference>
<dbReference type="FunFam" id="3.40.50.620:FF:000007">
    <property type="entry name" value="Glutamate--tRNA ligase"/>
    <property type="match status" value="1"/>
</dbReference>
<dbReference type="Gene3D" id="1.10.10.350">
    <property type="match status" value="1"/>
</dbReference>
<dbReference type="Gene3D" id="3.40.50.620">
    <property type="entry name" value="HUPs"/>
    <property type="match status" value="1"/>
</dbReference>
<dbReference type="HAMAP" id="MF_00022">
    <property type="entry name" value="Glu_tRNA_synth_type1"/>
    <property type="match status" value="1"/>
</dbReference>
<dbReference type="InterPro" id="IPR045462">
    <property type="entry name" value="aa-tRNA-synth_I_cd-bd"/>
</dbReference>
<dbReference type="InterPro" id="IPR020751">
    <property type="entry name" value="aa-tRNA-synth_I_codon-bd_sub2"/>
</dbReference>
<dbReference type="InterPro" id="IPR001412">
    <property type="entry name" value="aa-tRNA-synth_I_CS"/>
</dbReference>
<dbReference type="InterPro" id="IPR008925">
    <property type="entry name" value="aa_tRNA-synth_I_cd-bd_sf"/>
</dbReference>
<dbReference type="InterPro" id="IPR004527">
    <property type="entry name" value="Glu-tRNA-ligase_bac/mito"/>
</dbReference>
<dbReference type="InterPro" id="IPR000924">
    <property type="entry name" value="Glu/Gln-tRNA-synth"/>
</dbReference>
<dbReference type="InterPro" id="IPR020058">
    <property type="entry name" value="Glu/Gln-tRNA-synth_Ib_cat-dom"/>
</dbReference>
<dbReference type="InterPro" id="IPR049940">
    <property type="entry name" value="GluQ/Sye"/>
</dbReference>
<dbReference type="InterPro" id="IPR033910">
    <property type="entry name" value="GluRS_core"/>
</dbReference>
<dbReference type="InterPro" id="IPR014729">
    <property type="entry name" value="Rossmann-like_a/b/a_fold"/>
</dbReference>
<dbReference type="NCBIfam" id="TIGR00464">
    <property type="entry name" value="gltX_bact"/>
    <property type="match status" value="1"/>
</dbReference>
<dbReference type="PANTHER" id="PTHR43311">
    <property type="entry name" value="GLUTAMATE--TRNA LIGASE"/>
    <property type="match status" value="1"/>
</dbReference>
<dbReference type="PANTHER" id="PTHR43311:SF2">
    <property type="entry name" value="GLUTAMATE--TRNA LIGASE, MITOCHONDRIAL-RELATED"/>
    <property type="match status" value="1"/>
</dbReference>
<dbReference type="Pfam" id="PF19269">
    <property type="entry name" value="Anticodon_2"/>
    <property type="match status" value="1"/>
</dbReference>
<dbReference type="Pfam" id="PF00749">
    <property type="entry name" value="tRNA-synt_1c"/>
    <property type="match status" value="1"/>
</dbReference>
<dbReference type="PRINTS" id="PR00987">
    <property type="entry name" value="TRNASYNTHGLU"/>
</dbReference>
<dbReference type="SUPFAM" id="SSF48163">
    <property type="entry name" value="An anticodon-binding domain of class I aminoacyl-tRNA synthetases"/>
    <property type="match status" value="1"/>
</dbReference>
<dbReference type="SUPFAM" id="SSF52374">
    <property type="entry name" value="Nucleotidylyl transferase"/>
    <property type="match status" value="1"/>
</dbReference>
<dbReference type="PROSITE" id="PS00178">
    <property type="entry name" value="AA_TRNA_LIGASE_I"/>
    <property type="match status" value="1"/>
</dbReference>
<feature type="chain" id="PRO_0000119644" description="Glutamate--tRNA ligase">
    <location>
        <begin position="1"/>
        <end position="471"/>
    </location>
</feature>
<feature type="short sequence motif" description="'HIGH' region" evidence="1">
    <location>
        <begin position="9"/>
        <end position="19"/>
    </location>
</feature>
<feature type="short sequence motif" description="'KMSKS' region" evidence="1">
    <location>
        <begin position="237"/>
        <end position="241"/>
    </location>
</feature>
<feature type="binding site" evidence="1">
    <location>
        <position position="98"/>
    </location>
    <ligand>
        <name>Zn(2+)</name>
        <dbReference type="ChEBI" id="CHEBI:29105"/>
    </ligand>
</feature>
<feature type="binding site" evidence="1">
    <location>
        <position position="100"/>
    </location>
    <ligand>
        <name>Zn(2+)</name>
        <dbReference type="ChEBI" id="CHEBI:29105"/>
    </ligand>
</feature>
<feature type="binding site" evidence="1">
    <location>
        <position position="125"/>
    </location>
    <ligand>
        <name>Zn(2+)</name>
        <dbReference type="ChEBI" id="CHEBI:29105"/>
    </ligand>
</feature>
<feature type="binding site" evidence="1">
    <location>
        <position position="127"/>
    </location>
    <ligand>
        <name>Zn(2+)</name>
        <dbReference type="ChEBI" id="CHEBI:29105"/>
    </ligand>
</feature>
<feature type="binding site" evidence="1">
    <location>
        <position position="240"/>
    </location>
    <ligand>
        <name>ATP</name>
        <dbReference type="ChEBI" id="CHEBI:30616"/>
    </ligand>
</feature>
<protein>
    <recommendedName>
        <fullName evidence="1">Glutamate--tRNA ligase</fullName>
        <ecNumber evidence="1">6.1.1.17</ecNumber>
    </recommendedName>
    <alternativeName>
        <fullName evidence="1">Glutamyl-tRNA synthetase</fullName>
        <shortName evidence="1">GluRS</shortName>
    </alternativeName>
</protein>
<name>SYE_SALCH</name>
<reference key="1">
    <citation type="journal article" date="2005" name="Nucleic Acids Res.">
        <title>The genome sequence of Salmonella enterica serovar Choleraesuis, a highly invasive and resistant zoonotic pathogen.</title>
        <authorList>
            <person name="Chiu C.-H."/>
            <person name="Tang P."/>
            <person name="Chu C."/>
            <person name="Hu S."/>
            <person name="Bao Q."/>
            <person name="Yu J."/>
            <person name="Chou Y.-Y."/>
            <person name="Wang H.-S."/>
            <person name="Lee Y.-S."/>
        </authorList>
    </citation>
    <scope>NUCLEOTIDE SEQUENCE [LARGE SCALE GENOMIC DNA]</scope>
    <source>
        <strain>SC-B67</strain>
    </source>
</reference>
<sequence length="471" mass="53706">MKIKTRFAPSPTGYLHVGGARTALYSWLFARHHGGEFVLRIEDTDLERSTPEAIEAIMDGMNWLNLEWDEGPYFQTKRFERYNAVIDEMLEAGTAYKCYCSKERLEQLREEQMAKGEKPRYDGRCRHSHEHHDDDEPCVVRFANPQDGSVIFDDQIRGPIEFSNQELDDLIIRRTDGSPTYNFCVVVDDWDMEITHVIRGEDHINNTPRQINILKALNAPVPMYAHVSMINGDDGKKLSKRHGAVSVMQYRDDGYLPEALLNYLVRLGWSSGDQEIFTREEMIKLFSLGAVSKSASAFNTDKLLWLNHHYINTLAPEYVATHLQWHIEQENIDTRNGPQLAELVKLLGERCKTLKEMAQSCRYFYEDFSEFDADAAKKHLRPVARQPLEVVRDKLSAITDWSAENVHHAIQATADELEVGMGKVGMPLRVAVTGAGQSPALDVTVHAIGKTRSIERINKALGFIAERESQQ</sequence>
<organism>
    <name type="scientific">Salmonella choleraesuis (strain SC-B67)</name>
    <dbReference type="NCBI Taxonomy" id="321314"/>
    <lineage>
        <taxon>Bacteria</taxon>
        <taxon>Pseudomonadati</taxon>
        <taxon>Pseudomonadota</taxon>
        <taxon>Gammaproteobacteria</taxon>
        <taxon>Enterobacterales</taxon>
        <taxon>Enterobacteriaceae</taxon>
        <taxon>Salmonella</taxon>
    </lineage>
</organism>
<accession>Q57LU0</accession>
<proteinExistence type="inferred from homology"/>
<evidence type="ECO:0000255" key="1">
    <source>
        <dbReference type="HAMAP-Rule" id="MF_00022"/>
    </source>
</evidence>